<organism>
    <name type="scientific">Pseudomonas paraeruginosa (strain DSM 24068 / PA7)</name>
    <name type="common">Pseudomonas aeruginosa (strain PA7)</name>
    <dbReference type="NCBI Taxonomy" id="381754"/>
    <lineage>
        <taxon>Bacteria</taxon>
        <taxon>Pseudomonadati</taxon>
        <taxon>Pseudomonadota</taxon>
        <taxon>Gammaproteobacteria</taxon>
        <taxon>Pseudomonadales</taxon>
        <taxon>Pseudomonadaceae</taxon>
        <taxon>Pseudomonas</taxon>
        <taxon>Pseudomonas paraeruginosa</taxon>
    </lineage>
</organism>
<accession>A6V7X3</accession>
<proteinExistence type="inferred from homology"/>
<protein>
    <recommendedName>
        <fullName evidence="1">DNA ligase</fullName>
        <ecNumber evidence="1">6.5.1.2</ecNumber>
    </recommendedName>
    <alternativeName>
        <fullName evidence="1">Polydeoxyribonucleotide synthase [NAD(+)]</fullName>
    </alternativeName>
</protein>
<comment type="function">
    <text evidence="1">DNA ligase that catalyzes the formation of phosphodiester linkages between 5'-phosphoryl and 3'-hydroxyl groups in double-stranded DNA using NAD as a coenzyme and as the energy source for the reaction. It is essential for DNA replication and repair of damaged DNA.</text>
</comment>
<comment type="catalytic activity">
    <reaction evidence="1">
        <text>NAD(+) + (deoxyribonucleotide)n-3'-hydroxyl + 5'-phospho-(deoxyribonucleotide)m = (deoxyribonucleotide)n+m + AMP + beta-nicotinamide D-nucleotide.</text>
        <dbReference type="EC" id="6.5.1.2"/>
    </reaction>
</comment>
<comment type="cofactor">
    <cofactor evidence="1">
        <name>Mg(2+)</name>
        <dbReference type="ChEBI" id="CHEBI:18420"/>
    </cofactor>
    <cofactor evidence="1">
        <name>Mn(2+)</name>
        <dbReference type="ChEBI" id="CHEBI:29035"/>
    </cofactor>
</comment>
<comment type="similarity">
    <text evidence="1">Belongs to the NAD-dependent DNA ligase family. LigA subfamily.</text>
</comment>
<evidence type="ECO:0000255" key="1">
    <source>
        <dbReference type="HAMAP-Rule" id="MF_01588"/>
    </source>
</evidence>
<dbReference type="EC" id="6.5.1.2" evidence="1"/>
<dbReference type="EMBL" id="CP000744">
    <property type="protein sequence ID" value="ABR81959.1"/>
    <property type="molecule type" value="Genomic_DNA"/>
</dbReference>
<dbReference type="RefSeq" id="WP_012076363.1">
    <property type="nucleotide sequence ID" value="NC_009656.1"/>
</dbReference>
<dbReference type="SMR" id="A6V7X3"/>
<dbReference type="KEGG" id="pap:PSPA7_3804"/>
<dbReference type="HOGENOM" id="CLU_007764_2_1_6"/>
<dbReference type="Proteomes" id="UP000001582">
    <property type="component" value="Chromosome"/>
</dbReference>
<dbReference type="GO" id="GO:0005829">
    <property type="term" value="C:cytosol"/>
    <property type="evidence" value="ECO:0007669"/>
    <property type="project" value="TreeGrafter"/>
</dbReference>
<dbReference type="GO" id="GO:0003911">
    <property type="term" value="F:DNA ligase (NAD+) activity"/>
    <property type="evidence" value="ECO:0007669"/>
    <property type="project" value="UniProtKB-UniRule"/>
</dbReference>
<dbReference type="GO" id="GO:0046872">
    <property type="term" value="F:metal ion binding"/>
    <property type="evidence" value="ECO:0007669"/>
    <property type="project" value="UniProtKB-KW"/>
</dbReference>
<dbReference type="GO" id="GO:0006281">
    <property type="term" value="P:DNA repair"/>
    <property type="evidence" value="ECO:0007669"/>
    <property type="project" value="UniProtKB-KW"/>
</dbReference>
<dbReference type="GO" id="GO:0006260">
    <property type="term" value="P:DNA replication"/>
    <property type="evidence" value="ECO:0007669"/>
    <property type="project" value="UniProtKB-KW"/>
</dbReference>
<dbReference type="CDD" id="cd17748">
    <property type="entry name" value="BRCT_DNA_ligase_like"/>
    <property type="match status" value="1"/>
</dbReference>
<dbReference type="CDD" id="cd00114">
    <property type="entry name" value="LIGANc"/>
    <property type="match status" value="1"/>
</dbReference>
<dbReference type="FunFam" id="1.10.150.20:FF:000006">
    <property type="entry name" value="DNA ligase"/>
    <property type="match status" value="1"/>
</dbReference>
<dbReference type="FunFam" id="1.10.150.20:FF:000007">
    <property type="entry name" value="DNA ligase"/>
    <property type="match status" value="1"/>
</dbReference>
<dbReference type="FunFam" id="1.10.287.610:FF:000002">
    <property type="entry name" value="DNA ligase"/>
    <property type="match status" value="1"/>
</dbReference>
<dbReference type="FunFam" id="2.40.50.140:FF:000012">
    <property type="entry name" value="DNA ligase"/>
    <property type="match status" value="1"/>
</dbReference>
<dbReference type="FunFam" id="3.30.470.30:FF:000001">
    <property type="entry name" value="DNA ligase"/>
    <property type="match status" value="1"/>
</dbReference>
<dbReference type="FunFam" id="3.40.50.10190:FF:000069">
    <property type="entry name" value="DNA ligase"/>
    <property type="match status" value="1"/>
</dbReference>
<dbReference type="Gene3D" id="6.20.10.30">
    <property type="match status" value="1"/>
</dbReference>
<dbReference type="Gene3D" id="1.10.150.20">
    <property type="entry name" value="5' to 3' exonuclease, C-terminal subdomain"/>
    <property type="match status" value="3"/>
</dbReference>
<dbReference type="Gene3D" id="3.40.50.10190">
    <property type="entry name" value="BRCT domain"/>
    <property type="match status" value="1"/>
</dbReference>
<dbReference type="Gene3D" id="3.30.470.30">
    <property type="entry name" value="DNA ligase/mRNA capping enzyme"/>
    <property type="match status" value="1"/>
</dbReference>
<dbReference type="Gene3D" id="1.10.287.610">
    <property type="entry name" value="Helix hairpin bin"/>
    <property type="match status" value="1"/>
</dbReference>
<dbReference type="Gene3D" id="2.40.50.140">
    <property type="entry name" value="Nucleic acid-binding proteins"/>
    <property type="match status" value="1"/>
</dbReference>
<dbReference type="HAMAP" id="MF_01588">
    <property type="entry name" value="DNA_ligase_A"/>
    <property type="match status" value="1"/>
</dbReference>
<dbReference type="InterPro" id="IPR001357">
    <property type="entry name" value="BRCT_dom"/>
</dbReference>
<dbReference type="InterPro" id="IPR036420">
    <property type="entry name" value="BRCT_dom_sf"/>
</dbReference>
<dbReference type="InterPro" id="IPR041663">
    <property type="entry name" value="DisA/LigA_HHH"/>
</dbReference>
<dbReference type="InterPro" id="IPR001679">
    <property type="entry name" value="DNA_ligase"/>
</dbReference>
<dbReference type="InterPro" id="IPR018239">
    <property type="entry name" value="DNA_ligase_AS"/>
</dbReference>
<dbReference type="InterPro" id="IPR033136">
    <property type="entry name" value="DNA_ligase_CS"/>
</dbReference>
<dbReference type="InterPro" id="IPR013839">
    <property type="entry name" value="DNAligase_adenylation"/>
</dbReference>
<dbReference type="InterPro" id="IPR013840">
    <property type="entry name" value="DNAligase_N"/>
</dbReference>
<dbReference type="InterPro" id="IPR012340">
    <property type="entry name" value="NA-bd_OB-fold"/>
</dbReference>
<dbReference type="InterPro" id="IPR004150">
    <property type="entry name" value="NAD_DNA_ligase_OB"/>
</dbReference>
<dbReference type="InterPro" id="IPR010994">
    <property type="entry name" value="RuvA_2-like"/>
</dbReference>
<dbReference type="InterPro" id="IPR004149">
    <property type="entry name" value="Znf_DNAligase_C4"/>
</dbReference>
<dbReference type="NCBIfam" id="TIGR00575">
    <property type="entry name" value="dnlj"/>
    <property type="match status" value="1"/>
</dbReference>
<dbReference type="NCBIfam" id="NF005932">
    <property type="entry name" value="PRK07956.1"/>
    <property type="match status" value="1"/>
</dbReference>
<dbReference type="PANTHER" id="PTHR23389">
    <property type="entry name" value="CHROMOSOME TRANSMISSION FIDELITY FACTOR 18"/>
    <property type="match status" value="1"/>
</dbReference>
<dbReference type="PANTHER" id="PTHR23389:SF9">
    <property type="entry name" value="DNA LIGASE"/>
    <property type="match status" value="1"/>
</dbReference>
<dbReference type="Pfam" id="PF00533">
    <property type="entry name" value="BRCT"/>
    <property type="match status" value="1"/>
</dbReference>
<dbReference type="Pfam" id="PF01653">
    <property type="entry name" value="DNA_ligase_aden"/>
    <property type="match status" value="1"/>
</dbReference>
<dbReference type="Pfam" id="PF03120">
    <property type="entry name" value="DNA_ligase_OB"/>
    <property type="match status" value="1"/>
</dbReference>
<dbReference type="Pfam" id="PF03119">
    <property type="entry name" value="DNA_ligase_ZBD"/>
    <property type="match status" value="1"/>
</dbReference>
<dbReference type="Pfam" id="PF12826">
    <property type="entry name" value="HHH_2"/>
    <property type="match status" value="2"/>
</dbReference>
<dbReference type="Pfam" id="PF22745">
    <property type="entry name" value="Nlig-Ia"/>
    <property type="match status" value="1"/>
</dbReference>
<dbReference type="PIRSF" id="PIRSF001604">
    <property type="entry name" value="LigA"/>
    <property type="match status" value="1"/>
</dbReference>
<dbReference type="SMART" id="SM00292">
    <property type="entry name" value="BRCT"/>
    <property type="match status" value="1"/>
</dbReference>
<dbReference type="SMART" id="SM00532">
    <property type="entry name" value="LIGANc"/>
    <property type="match status" value="1"/>
</dbReference>
<dbReference type="SUPFAM" id="SSF52113">
    <property type="entry name" value="BRCT domain"/>
    <property type="match status" value="1"/>
</dbReference>
<dbReference type="SUPFAM" id="SSF56091">
    <property type="entry name" value="DNA ligase/mRNA capping enzyme, catalytic domain"/>
    <property type="match status" value="1"/>
</dbReference>
<dbReference type="SUPFAM" id="SSF50249">
    <property type="entry name" value="Nucleic acid-binding proteins"/>
    <property type="match status" value="1"/>
</dbReference>
<dbReference type="SUPFAM" id="SSF47781">
    <property type="entry name" value="RuvA domain 2-like"/>
    <property type="match status" value="2"/>
</dbReference>
<dbReference type="PROSITE" id="PS50172">
    <property type="entry name" value="BRCT"/>
    <property type="match status" value="1"/>
</dbReference>
<dbReference type="PROSITE" id="PS01055">
    <property type="entry name" value="DNA_LIGASE_N1"/>
    <property type="match status" value="1"/>
</dbReference>
<dbReference type="PROSITE" id="PS01056">
    <property type="entry name" value="DNA_LIGASE_N2"/>
    <property type="match status" value="1"/>
</dbReference>
<reference key="1">
    <citation type="submission" date="2007-06" db="EMBL/GenBank/DDBJ databases">
        <authorList>
            <person name="Dodson R.J."/>
            <person name="Harkins D."/>
            <person name="Paulsen I.T."/>
        </authorList>
    </citation>
    <scope>NUCLEOTIDE SEQUENCE [LARGE SCALE GENOMIC DNA]</scope>
    <source>
        <strain>DSM 24068 / PA7</strain>
    </source>
</reference>
<sequence>MTDTQAAAERIAQLRTELDTHNYRYYVLDEPSIPDAEYDRLFRELQALEAEHPQLLTPDSPTQRVSGTPASAFGEVRHEIPMLSLGNAFEEQDLLDFDRRVREGLADLLPGGDLLGGGAEVEYSCEPKLDGLAVSLLYENGQLVRGATRGDGSTGEDITSNVRTIRNVPLKLHGEGWPDILEVRGEVFMSRAGFEALNAKAVETGGKTFANPRNAAAGSLRQLDSKITASRPLEFCAYGFGRVSGTLPDTQVGILEAFRGWGIPISRELRLVKGAQACRDYYDDIGRRRDALAYEIDGVVFKVNRIAFQRELGFRAREPRWAIAHKFPAREELTELLGVEFQVGRTGAVTPVARLKPVQVAGVTVSNATLHNMDEVARLGLRIGDTVVIRRAGDVIPQVMQVVLERRPADAQPIEVPEHCPVCGSAVERTQLVRRSKGRESLSEGAIYRCVGRLSCQAQLKQAIIHFVSRRAMDIDGLGDKIVEQLVDRGLVASPADLYTLTYDQVFELEGFAELSTNNLLAAIADSRTPSLARFIFALGIPDVGEETAKLLARSLGSLERIGKALPEVLTYLPDVGAEVAYEIHNFFADEHNRQVIAQLRDAEHGVQLQEEGEVAAEFAACASLAGFIDKLNIPFIAATGAEKLASRFGSLDGIIRADWLDLRQVERLPERAAKSLRDFLDEPANVQRALAIEAQLREFGMHWQSERKAVEGLPLAGQTWVLTGTLEAMSRDVAKEKLEGLGAKVAGSVSARTHCVVAGPGAGSKLAKANELGLKVLDEDGLLKLLDEYGVAH</sequence>
<keyword id="KW-0227">DNA damage</keyword>
<keyword id="KW-0234">DNA repair</keyword>
<keyword id="KW-0235">DNA replication</keyword>
<keyword id="KW-0436">Ligase</keyword>
<keyword id="KW-0460">Magnesium</keyword>
<keyword id="KW-0464">Manganese</keyword>
<keyword id="KW-0479">Metal-binding</keyword>
<keyword id="KW-0520">NAD</keyword>
<keyword id="KW-0862">Zinc</keyword>
<feature type="chain" id="PRO_0000340367" description="DNA ligase">
    <location>
        <begin position="1"/>
        <end position="794"/>
    </location>
</feature>
<feature type="domain" description="BRCT" evidence="1">
    <location>
        <begin position="711"/>
        <end position="794"/>
    </location>
</feature>
<feature type="active site" description="N6-AMP-lysine intermediate" evidence="1">
    <location>
        <position position="128"/>
    </location>
</feature>
<feature type="binding site" evidence="1">
    <location>
        <begin position="35"/>
        <end position="39"/>
    </location>
    <ligand>
        <name>NAD(+)</name>
        <dbReference type="ChEBI" id="CHEBI:57540"/>
    </ligand>
</feature>
<feature type="binding site" evidence="1">
    <location>
        <begin position="84"/>
        <end position="85"/>
    </location>
    <ligand>
        <name>NAD(+)</name>
        <dbReference type="ChEBI" id="CHEBI:57540"/>
    </ligand>
</feature>
<feature type="binding site" evidence="1">
    <location>
        <position position="126"/>
    </location>
    <ligand>
        <name>NAD(+)</name>
        <dbReference type="ChEBI" id="CHEBI:57540"/>
    </ligand>
</feature>
<feature type="binding site" evidence="1">
    <location>
        <position position="149"/>
    </location>
    <ligand>
        <name>NAD(+)</name>
        <dbReference type="ChEBI" id="CHEBI:57540"/>
    </ligand>
</feature>
<feature type="binding site" evidence="1">
    <location>
        <position position="186"/>
    </location>
    <ligand>
        <name>NAD(+)</name>
        <dbReference type="ChEBI" id="CHEBI:57540"/>
    </ligand>
</feature>
<feature type="binding site" evidence="1">
    <location>
        <position position="302"/>
    </location>
    <ligand>
        <name>NAD(+)</name>
        <dbReference type="ChEBI" id="CHEBI:57540"/>
    </ligand>
</feature>
<feature type="binding site" evidence="1">
    <location>
        <position position="326"/>
    </location>
    <ligand>
        <name>NAD(+)</name>
        <dbReference type="ChEBI" id="CHEBI:57540"/>
    </ligand>
</feature>
<feature type="binding site" evidence="1">
    <location>
        <position position="420"/>
    </location>
    <ligand>
        <name>Zn(2+)</name>
        <dbReference type="ChEBI" id="CHEBI:29105"/>
    </ligand>
</feature>
<feature type="binding site" evidence="1">
    <location>
        <position position="423"/>
    </location>
    <ligand>
        <name>Zn(2+)</name>
        <dbReference type="ChEBI" id="CHEBI:29105"/>
    </ligand>
</feature>
<feature type="binding site" evidence="1">
    <location>
        <position position="450"/>
    </location>
    <ligand>
        <name>Zn(2+)</name>
        <dbReference type="ChEBI" id="CHEBI:29105"/>
    </ligand>
</feature>
<feature type="binding site" evidence="1">
    <location>
        <position position="456"/>
    </location>
    <ligand>
        <name>Zn(2+)</name>
        <dbReference type="ChEBI" id="CHEBI:29105"/>
    </ligand>
</feature>
<name>DNLJ_PSEP7</name>
<gene>
    <name evidence="1" type="primary">ligA</name>
    <name type="ordered locus">PSPA7_3804</name>
</gene>